<evidence type="ECO:0000250" key="1"/>
<evidence type="ECO:0000250" key="2">
    <source>
        <dbReference type="UniProtKB" id="P05023"/>
    </source>
</evidence>
<evidence type="ECO:0000250" key="3">
    <source>
        <dbReference type="UniProtKB" id="P06685"/>
    </source>
</evidence>
<evidence type="ECO:0000250" key="4">
    <source>
        <dbReference type="UniProtKB" id="Q8VDN2"/>
    </source>
</evidence>
<evidence type="ECO:0000255" key="5"/>
<evidence type="ECO:0000256" key="6">
    <source>
        <dbReference type="SAM" id="MobiDB-lite"/>
    </source>
</evidence>
<evidence type="ECO:0000305" key="7"/>
<reference key="1">
    <citation type="journal article" date="1989" name="FEBS Lett.">
        <title>Structure of the alpha 1 subunit of horse Na,K-ATPase gene.</title>
        <authorList>
            <person name="Kano I."/>
            <person name="Nagai F."/>
            <person name="Satoh K."/>
            <person name="Ushiyama K."/>
            <person name="Nakao T."/>
            <person name="Kano K."/>
        </authorList>
    </citation>
    <scope>NUCLEOTIDE SEQUENCE [GENOMIC DNA]</scope>
</reference>
<keyword id="KW-0007">Acetylation</keyword>
<keyword id="KW-0067">ATP-binding</keyword>
<keyword id="KW-1003">Cell membrane</keyword>
<keyword id="KW-0966">Cell projection</keyword>
<keyword id="KW-0406">Ion transport</keyword>
<keyword id="KW-0460">Magnesium</keyword>
<keyword id="KW-0472">Membrane</keyword>
<keyword id="KW-0479">Metal-binding</keyword>
<keyword id="KW-0547">Nucleotide-binding</keyword>
<keyword id="KW-0597">Phosphoprotein</keyword>
<keyword id="KW-0630">Potassium</keyword>
<keyword id="KW-0633">Potassium transport</keyword>
<keyword id="KW-1185">Reference proteome</keyword>
<keyword id="KW-0915">Sodium</keyword>
<keyword id="KW-0739">Sodium transport</keyword>
<keyword id="KW-0740">Sodium/potassium transport</keyword>
<keyword id="KW-1278">Translocase</keyword>
<keyword id="KW-0812">Transmembrane</keyword>
<keyword id="KW-1133">Transmembrane helix</keyword>
<keyword id="KW-0813">Transport</keyword>
<sequence>MGKGGGRDKYEPAAISEHGNKKKAKKERDMDELKKEVSMDDHKLSLDELQRKYGTDLSRGLTTARAAEILARDGPNALTPPPTTPEWVKFCRQLFGGFSMLLWIGAILCFLAYGIQAATEEEPQNDNLYLGVVLSAVVIITGCFSYYQEAKSSKIMESFKNMVPQQALVVRNGEKMSINAEEVVVGDLVEVKGGDRIPADLRIISANGCKVDNSSLTGESEPQTRSPDFTNENPLETRNIAFFSTNCVEGTARGIVVYTGDRTVMGRIATLASGLEGGQTPIAAEIEHFIHIITGVAVFLGVTFFILSLILEYTWLEAVIFLIGIIVANVPEGLLATVTVCLTLTAKRMARKNCLVKNLEAVETLGSTSTICSDKTGTLTQNRMTVAHMWFDNQIHEADTTENQSGVSFDKTSATWLSLSRIAGLCNRAVFQANQENIPILKRAVAGDASESALLKCIELCCGSVKEMRDRYPKIVEIPFNSTNKYQLSIHKNPNTSEPQHLLVMKGAPERILDRCSSILLNGKEQPLDEELKDAFQNAYLELGGLGERVLGFCHLFLPDEQFPEGFQFDTDDVNFPLENLCFVGLISMIDPPRAAVPDAVGKCRSAGIKVIMVTGDHPITAKAIAKGVGIISEGNETVEDIAARLNIPVSQVNPRDAKACVVHGSDLKDMTPEQLDDILRHHTEIVFARTSPQQKLIIVEGCQRQGAIVAVTGDGVNDSPALKKADIGVAMGIAGSDVSKQAADMILLDDNFASIVTGVEEGRLIFDNLKKSIAYTLTSNIPEITPFLIFIIANIPLPLGTVTILCIDLGTDMVPAISLAYEQAESDIMKRQPRNPQTDKLVNERLISMAYGQIGMIQALGGFFTYFVILAENGFLPIHLLGLRVDWDDRWVNDVEDSYGQQWTYEQRKIVEFTCHTAFFVSIVVVQWADLVICKTRRNSVFQQGMKNKILIFGLFEETALAAFLSYCPGMGVALRMYPLKPTWWFCAFPYSLLIFVYDEVRKLIIRRRPGGWVEKETYY</sequence>
<name>AT1A1_HORSE</name>
<accession>P18907</accession>
<feature type="propeptide" id="PRO_0000002481" evidence="1">
    <location>
        <begin position="1"/>
        <end position="5"/>
    </location>
</feature>
<feature type="chain" id="PRO_0000002482" description="Sodium/potassium-transporting ATPase subunit alpha-1">
    <location>
        <begin position="6"/>
        <end position="1021"/>
    </location>
</feature>
<feature type="topological domain" description="Cytoplasmic" evidence="5">
    <location>
        <begin position="6"/>
        <end position="85"/>
    </location>
</feature>
<feature type="transmembrane region" description="Helical" evidence="5">
    <location>
        <begin position="86"/>
        <end position="106"/>
    </location>
</feature>
<feature type="topological domain" description="Extracellular" evidence="5">
    <location>
        <begin position="107"/>
        <end position="129"/>
    </location>
</feature>
<feature type="transmembrane region" description="Helical" evidence="5">
    <location>
        <begin position="130"/>
        <end position="150"/>
    </location>
</feature>
<feature type="topological domain" description="Cytoplasmic" evidence="5">
    <location>
        <begin position="151"/>
        <end position="286"/>
    </location>
</feature>
<feature type="transmembrane region" description="Helical" evidence="5">
    <location>
        <begin position="287"/>
        <end position="306"/>
    </location>
</feature>
<feature type="topological domain" description="Extracellular" evidence="5">
    <location>
        <begin position="307"/>
        <end position="318"/>
    </location>
</feature>
<feature type="transmembrane region" description="Helical" evidence="5">
    <location>
        <begin position="319"/>
        <end position="336"/>
    </location>
</feature>
<feature type="topological domain" description="Cytoplasmic" evidence="5">
    <location>
        <begin position="337"/>
        <end position="770"/>
    </location>
</feature>
<feature type="transmembrane region" description="Helical" evidence="5">
    <location>
        <begin position="771"/>
        <end position="790"/>
    </location>
</feature>
<feature type="topological domain" description="Extracellular" evidence="5">
    <location>
        <begin position="791"/>
        <end position="800"/>
    </location>
</feature>
<feature type="transmembrane region" description="Helical" evidence="5">
    <location>
        <begin position="801"/>
        <end position="821"/>
    </location>
</feature>
<feature type="topological domain" description="Cytoplasmic" evidence="5">
    <location>
        <begin position="822"/>
        <end position="841"/>
    </location>
</feature>
<feature type="transmembrane region" description="Helical" evidence="5">
    <location>
        <begin position="842"/>
        <end position="864"/>
    </location>
</feature>
<feature type="topological domain" description="Extracellular" evidence="5">
    <location>
        <begin position="865"/>
        <end position="916"/>
    </location>
</feature>
<feature type="transmembrane region" description="Helical" evidence="5">
    <location>
        <begin position="917"/>
        <end position="936"/>
    </location>
</feature>
<feature type="topological domain" description="Cytoplasmic" evidence="5">
    <location>
        <begin position="937"/>
        <end position="949"/>
    </location>
</feature>
<feature type="transmembrane region" description="Helical" evidence="5">
    <location>
        <begin position="950"/>
        <end position="968"/>
    </location>
</feature>
<feature type="topological domain" description="Extracellular" evidence="5">
    <location>
        <begin position="969"/>
        <end position="983"/>
    </location>
</feature>
<feature type="transmembrane region" description="Helical" evidence="5">
    <location>
        <begin position="984"/>
        <end position="1004"/>
    </location>
</feature>
<feature type="topological domain" description="Cytoplasmic" evidence="5">
    <location>
        <begin position="1005"/>
        <end position="1021"/>
    </location>
</feature>
<feature type="region of interest" description="Disordered" evidence="6">
    <location>
        <begin position="1"/>
        <end position="37"/>
    </location>
</feature>
<feature type="region of interest" description="Phosphoinositide-3 kinase binding" evidence="1">
    <location>
        <begin position="80"/>
        <end position="82"/>
    </location>
</feature>
<feature type="region of interest" description="Disordered" evidence="6">
    <location>
        <begin position="214"/>
        <end position="233"/>
    </location>
</feature>
<feature type="region of interest" description="Mediates interaction with SCN7A" evidence="4">
    <location>
        <begin position="594"/>
        <end position="715"/>
    </location>
</feature>
<feature type="compositionally biased region" description="Basic and acidic residues" evidence="6">
    <location>
        <begin position="1"/>
        <end position="11"/>
    </location>
</feature>
<feature type="compositionally biased region" description="Basic and acidic residues" evidence="6">
    <location>
        <begin position="26"/>
        <end position="37"/>
    </location>
</feature>
<feature type="active site" description="4-aspartylphosphate intermediate" evidence="1">
    <location>
        <position position="374"/>
    </location>
</feature>
<feature type="binding site" evidence="1">
    <location>
        <position position="485"/>
    </location>
    <ligand>
        <name>ATP</name>
        <dbReference type="ChEBI" id="CHEBI:30616"/>
    </ligand>
</feature>
<feature type="binding site" evidence="1">
    <location>
        <position position="715"/>
    </location>
    <ligand>
        <name>Mg(2+)</name>
        <dbReference type="ChEBI" id="CHEBI:18420"/>
    </ligand>
</feature>
<feature type="binding site" evidence="1">
    <location>
        <position position="719"/>
    </location>
    <ligand>
        <name>Mg(2+)</name>
        <dbReference type="ChEBI" id="CHEBI:18420"/>
    </ligand>
</feature>
<feature type="modified residue" description="N6-acetyllysine" evidence="4">
    <location>
        <position position="9"/>
    </location>
</feature>
<feature type="modified residue" description="Phosphotyrosine" evidence="3">
    <location>
        <position position="10"/>
    </location>
</feature>
<feature type="modified residue" description="Phosphoserine; by PKC" evidence="3">
    <location>
        <position position="16"/>
    </location>
</feature>
<feature type="modified residue" description="N6-acetyllysine" evidence="4">
    <location>
        <position position="21"/>
    </location>
</feature>
<feature type="modified residue" description="Phosphoserine" evidence="3">
    <location>
        <position position="38"/>
    </location>
</feature>
<feature type="modified residue" description="Phosphoserine" evidence="3">
    <location>
        <position position="45"/>
    </location>
</feature>
<feature type="modified residue" description="Phosphoserine" evidence="4">
    <location>
        <position position="226"/>
    </location>
</feature>
<feature type="modified residue" description="Phosphotyrosine" evidence="4">
    <location>
        <position position="258"/>
    </location>
</feature>
<feature type="modified residue" description="Phosphoserine" evidence="3">
    <location>
        <position position="450"/>
    </location>
</feature>
<feature type="modified residue" description="Phosphoserine" evidence="3">
    <location>
        <position position="482"/>
    </location>
</feature>
<feature type="modified residue" description="Phosphotyrosine" evidence="2">
    <location>
        <position position="540"/>
    </location>
</feature>
<feature type="modified residue" description="N6-succinyllysine" evidence="4">
    <location>
        <position position="659"/>
    </location>
</feature>
<feature type="modified residue" description="Phosphoserine" evidence="4">
    <location>
        <position position="666"/>
    </location>
</feature>
<feature type="modified residue" description="Phosphoserine; by PKA" evidence="3">
    <location>
        <position position="941"/>
    </location>
</feature>
<protein>
    <recommendedName>
        <fullName>Sodium/potassium-transporting ATPase subunit alpha-1</fullName>
        <shortName>Sodium pump subunit alpha-1</shortName>
        <ecNumber>7.2.2.13</ecNumber>
    </recommendedName>
    <alternativeName>
        <fullName>Na(+)/K(+) ATPase alpha-1 subunit</fullName>
    </alternativeName>
</protein>
<dbReference type="EC" id="7.2.2.13"/>
<dbReference type="EMBL" id="X16773">
    <property type="protein sequence ID" value="CAA34716.1"/>
    <property type="molecule type" value="Genomic_DNA"/>
</dbReference>
<dbReference type="EMBL" id="X16774">
    <property type="protein sequence ID" value="CAA34716.1"/>
    <property type="status" value="JOINED"/>
    <property type="molecule type" value="Genomic_DNA"/>
</dbReference>
<dbReference type="EMBL" id="X16775">
    <property type="protein sequence ID" value="CAA34716.1"/>
    <property type="status" value="JOINED"/>
    <property type="molecule type" value="Genomic_DNA"/>
</dbReference>
<dbReference type="EMBL" id="X16776">
    <property type="protein sequence ID" value="CAA34716.1"/>
    <property type="status" value="JOINED"/>
    <property type="molecule type" value="Genomic_DNA"/>
</dbReference>
<dbReference type="EMBL" id="X16777">
    <property type="protein sequence ID" value="CAA34716.1"/>
    <property type="status" value="JOINED"/>
    <property type="molecule type" value="Genomic_DNA"/>
</dbReference>
<dbReference type="EMBL" id="X16778">
    <property type="protein sequence ID" value="CAA34716.1"/>
    <property type="status" value="JOINED"/>
    <property type="molecule type" value="Genomic_DNA"/>
</dbReference>
<dbReference type="EMBL" id="X16779">
    <property type="protein sequence ID" value="CAA34716.1"/>
    <property type="status" value="JOINED"/>
    <property type="molecule type" value="Genomic_DNA"/>
</dbReference>
<dbReference type="EMBL" id="X16780">
    <property type="protein sequence ID" value="CAA34716.1"/>
    <property type="status" value="JOINED"/>
    <property type="molecule type" value="Genomic_DNA"/>
</dbReference>
<dbReference type="EMBL" id="X16781">
    <property type="protein sequence ID" value="CAA34716.1"/>
    <property type="status" value="JOINED"/>
    <property type="molecule type" value="Genomic_DNA"/>
</dbReference>
<dbReference type="EMBL" id="X16782">
    <property type="protein sequence ID" value="CAA34716.1"/>
    <property type="status" value="JOINED"/>
    <property type="molecule type" value="Genomic_DNA"/>
</dbReference>
<dbReference type="EMBL" id="X16783">
    <property type="protein sequence ID" value="CAA34716.1"/>
    <property type="status" value="JOINED"/>
    <property type="molecule type" value="Genomic_DNA"/>
</dbReference>
<dbReference type="EMBL" id="X16784">
    <property type="protein sequence ID" value="CAA34716.1"/>
    <property type="status" value="JOINED"/>
    <property type="molecule type" value="Genomic_DNA"/>
</dbReference>
<dbReference type="EMBL" id="X16785">
    <property type="protein sequence ID" value="CAA34716.1"/>
    <property type="status" value="JOINED"/>
    <property type="molecule type" value="Genomic_DNA"/>
</dbReference>
<dbReference type="EMBL" id="X16786">
    <property type="protein sequence ID" value="CAA34716.1"/>
    <property type="status" value="JOINED"/>
    <property type="molecule type" value="Genomic_DNA"/>
</dbReference>
<dbReference type="EMBL" id="X16787">
    <property type="protein sequence ID" value="CAA34716.1"/>
    <property type="status" value="JOINED"/>
    <property type="molecule type" value="Genomic_DNA"/>
</dbReference>
<dbReference type="EMBL" id="X16788">
    <property type="protein sequence ID" value="CAA34716.1"/>
    <property type="status" value="JOINED"/>
    <property type="molecule type" value="Genomic_DNA"/>
</dbReference>
<dbReference type="EMBL" id="X16789">
    <property type="protein sequence ID" value="CAA34716.1"/>
    <property type="status" value="JOINED"/>
    <property type="molecule type" value="Genomic_DNA"/>
</dbReference>
<dbReference type="EMBL" id="X16790">
    <property type="protein sequence ID" value="CAA34716.1"/>
    <property type="status" value="JOINED"/>
    <property type="molecule type" value="Genomic_DNA"/>
</dbReference>
<dbReference type="EMBL" id="X16791">
    <property type="protein sequence ID" value="CAA34716.1"/>
    <property type="status" value="JOINED"/>
    <property type="molecule type" value="Genomic_DNA"/>
</dbReference>
<dbReference type="EMBL" id="X16792">
    <property type="protein sequence ID" value="CAA34716.1"/>
    <property type="status" value="JOINED"/>
    <property type="molecule type" value="Genomic_DNA"/>
</dbReference>
<dbReference type="EMBL" id="X16793">
    <property type="protein sequence ID" value="CAA34716.1"/>
    <property type="status" value="JOINED"/>
    <property type="molecule type" value="Genomic_DNA"/>
</dbReference>
<dbReference type="EMBL" id="X16794">
    <property type="protein sequence ID" value="CAA34716.1"/>
    <property type="status" value="JOINED"/>
    <property type="molecule type" value="Genomic_DNA"/>
</dbReference>
<dbReference type="EMBL" id="X16795">
    <property type="protein sequence ID" value="CAA34716.1"/>
    <property type="status" value="JOINED"/>
    <property type="molecule type" value="Genomic_DNA"/>
</dbReference>
<dbReference type="PIR" id="S04630">
    <property type="entry name" value="S04630"/>
</dbReference>
<dbReference type="RefSeq" id="XP_023495991.1">
    <property type="nucleotide sequence ID" value="XM_023640223.2"/>
</dbReference>
<dbReference type="SMR" id="P18907"/>
<dbReference type="FunCoup" id="P18907">
    <property type="interactions" value="1075"/>
</dbReference>
<dbReference type="STRING" id="9796.ENSECAP00000022397"/>
<dbReference type="PaxDb" id="9796-ENSECAP00000022397"/>
<dbReference type="GeneID" id="100034139"/>
<dbReference type="InParanoid" id="P18907"/>
<dbReference type="OrthoDB" id="3352408at2759"/>
<dbReference type="Proteomes" id="UP000002281">
    <property type="component" value="Chromosome 5"/>
</dbReference>
<dbReference type="Bgee" id="ENSECAG00000024623">
    <property type="expression patterns" value="Expressed in adult mammalian kidney and 23 other cell types or tissues"/>
</dbReference>
<dbReference type="GO" id="GO:0030424">
    <property type="term" value="C:axon"/>
    <property type="evidence" value="ECO:0007669"/>
    <property type="project" value="UniProtKB-SubCell"/>
</dbReference>
<dbReference type="GO" id="GO:0016323">
    <property type="term" value="C:basolateral plasma membrane"/>
    <property type="evidence" value="ECO:0000250"/>
    <property type="project" value="UniProtKB"/>
</dbReference>
<dbReference type="GO" id="GO:0042470">
    <property type="term" value="C:melanosome"/>
    <property type="evidence" value="ECO:0007669"/>
    <property type="project" value="UniProtKB-SubCell"/>
</dbReference>
<dbReference type="GO" id="GO:0016020">
    <property type="term" value="C:membrane"/>
    <property type="evidence" value="ECO:0000250"/>
    <property type="project" value="UniProtKB"/>
</dbReference>
<dbReference type="GO" id="GO:0005886">
    <property type="term" value="C:plasma membrane"/>
    <property type="evidence" value="ECO:0000250"/>
    <property type="project" value="UniProtKB"/>
</dbReference>
<dbReference type="GO" id="GO:0042383">
    <property type="term" value="C:sarcolemma"/>
    <property type="evidence" value="ECO:0000318"/>
    <property type="project" value="GO_Central"/>
</dbReference>
<dbReference type="GO" id="GO:0005890">
    <property type="term" value="C:sodium:potassium-exchanging ATPase complex"/>
    <property type="evidence" value="ECO:0000318"/>
    <property type="project" value="GO_Central"/>
</dbReference>
<dbReference type="GO" id="GO:0005524">
    <property type="term" value="F:ATP binding"/>
    <property type="evidence" value="ECO:0007669"/>
    <property type="project" value="UniProtKB-KW"/>
</dbReference>
<dbReference type="GO" id="GO:0016887">
    <property type="term" value="F:ATP hydrolysis activity"/>
    <property type="evidence" value="ECO:0007669"/>
    <property type="project" value="InterPro"/>
</dbReference>
<dbReference type="GO" id="GO:0046872">
    <property type="term" value="F:metal ion binding"/>
    <property type="evidence" value="ECO:0007669"/>
    <property type="project" value="UniProtKB-KW"/>
</dbReference>
<dbReference type="GO" id="GO:0005391">
    <property type="term" value="F:P-type sodium:potassium-exchanging transporter activity"/>
    <property type="evidence" value="ECO:0000250"/>
    <property type="project" value="UniProtKB"/>
</dbReference>
<dbReference type="GO" id="GO:0030007">
    <property type="term" value="P:intracellular potassium ion homeostasis"/>
    <property type="evidence" value="ECO:0000318"/>
    <property type="project" value="GO_Central"/>
</dbReference>
<dbReference type="GO" id="GO:0006883">
    <property type="term" value="P:intracellular sodium ion homeostasis"/>
    <property type="evidence" value="ECO:0000318"/>
    <property type="project" value="GO_Central"/>
</dbReference>
<dbReference type="GO" id="GO:1990573">
    <property type="term" value="P:potassium ion import across plasma membrane"/>
    <property type="evidence" value="ECO:0000318"/>
    <property type="project" value="GO_Central"/>
</dbReference>
<dbReference type="GO" id="GO:1902600">
    <property type="term" value="P:proton transmembrane transport"/>
    <property type="evidence" value="ECO:0000318"/>
    <property type="project" value="GO_Central"/>
</dbReference>
<dbReference type="GO" id="GO:0002028">
    <property type="term" value="P:regulation of sodium ion transport"/>
    <property type="evidence" value="ECO:0000250"/>
    <property type="project" value="UniProtKB"/>
</dbReference>
<dbReference type="GO" id="GO:0036376">
    <property type="term" value="P:sodium ion export across plasma membrane"/>
    <property type="evidence" value="ECO:0000318"/>
    <property type="project" value="GO_Central"/>
</dbReference>
<dbReference type="CDD" id="cd02608">
    <property type="entry name" value="P-type_ATPase_Na-K_like"/>
    <property type="match status" value="1"/>
</dbReference>
<dbReference type="FunFam" id="1.20.1110.10:FF:000163">
    <property type="match status" value="1"/>
</dbReference>
<dbReference type="FunFam" id="2.70.150.10:FF:000106">
    <property type="entry name" value="Sodium/potassium-transporting ATPase subunit alpha"/>
    <property type="match status" value="1"/>
</dbReference>
<dbReference type="FunFam" id="3.40.1110.10:FF:000001">
    <property type="entry name" value="Sodium/potassium-transporting ATPase subunit alpha"/>
    <property type="match status" value="1"/>
</dbReference>
<dbReference type="FunFam" id="3.40.50.1000:FF:000004">
    <property type="entry name" value="Sodium/potassium-transporting ATPase subunit alpha"/>
    <property type="match status" value="1"/>
</dbReference>
<dbReference type="FunFam" id="1.20.1110.10:FF:000095">
    <property type="entry name" value="Sodium/potassium-transporting ATPase subunit alpha-1"/>
    <property type="match status" value="2"/>
</dbReference>
<dbReference type="Gene3D" id="3.40.1110.10">
    <property type="entry name" value="Calcium-transporting ATPase, cytoplasmic domain N"/>
    <property type="match status" value="1"/>
</dbReference>
<dbReference type="Gene3D" id="2.70.150.10">
    <property type="entry name" value="Calcium-transporting ATPase, cytoplasmic transduction domain A"/>
    <property type="match status" value="1"/>
</dbReference>
<dbReference type="Gene3D" id="1.20.1110.10">
    <property type="entry name" value="Calcium-transporting ATPase, transmembrane domain"/>
    <property type="match status" value="1"/>
</dbReference>
<dbReference type="Gene3D" id="3.40.50.1000">
    <property type="entry name" value="HAD superfamily/HAD-like"/>
    <property type="match status" value="1"/>
</dbReference>
<dbReference type="InterPro" id="IPR006068">
    <property type="entry name" value="ATPase_P-typ_cation-transptr_C"/>
</dbReference>
<dbReference type="InterPro" id="IPR004014">
    <property type="entry name" value="ATPase_P-typ_cation-transptr_N"/>
</dbReference>
<dbReference type="InterPro" id="IPR023299">
    <property type="entry name" value="ATPase_P-typ_cyto_dom_N"/>
</dbReference>
<dbReference type="InterPro" id="IPR018303">
    <property type="entry name" value="ATPase_P-typ_P_site"/>
</dbReference>
<dbReference type="InterPro" id="IPR023298">
    <property type="entry name" value="ATPase_P-typ_TM_dom_sf"/>
</dbReference>
<dbReference type="InterPro" id="IPR008250">
    <property type="entry name" value="ATPase_P-typ_transduc_dom_A_sf"/>
</dbReference>
<dbReference type="InterPro" id="IPR050510">
    <property type="entry name" value="Cation_transp_ATPase_P-type"/>
</dbReference>
<dbReference type="InterPro" id="IPR036412">
    <property type="entry name" value="HAD-like_sf"/>
</dbReference>
<dbReference type="InterPro" id="IPR023214">
    <property type="entry name" value="HAD_sf"/>
</dbReference>
<dbReference type="InterPro" id="IPR005775">
    <property type="entry name" value="P-type_ATPase_IIC"/>
</dbReference>
<dbReference type="InterPro" id="IPR001757">
    <property type="entry name" value="P_typ_ATPase"/>
</dbReference>
<dbReference type="InterPro" id="IPR044492">
    <property type="entry name" value="P_typ_ATPase_HD_dom"/>
</dbReference>
<dbReference type="NCBIfam" id="TIGR01106">
    <property type="entry name" value="ATPase-IIC_X-K"/>
    <property type="match status" value="1"/>
</dbReference>
<dbReference type="NCBIfam" id="TIGR01494">
    <property type="entry name" value="ATPase_P-type"/>
    <property type="match status" value="2"/>
</dbReference>
<dbReference type="PANTHER" id="PTHR43294">
    <property type="entry name" value="SODIUM/POTASSIUM-TRANSPORTING ATPASE SUBUNIT ALPHA"/>
    <property type="match status" value="1"/>
</dbReference>
<dbReference type="PANTHER" id="PTHR43294:SF9">
    <property type="entry name" value="SODIUM_POTASSIUM-TRANSPORTING ATPASE SUBUNIT ALPHA-1"/>
    <property type="match status" value="1"/>
</dbReference>
<dbReference type="Pfam" id="PF13246">
    <property type="entry name" value="Cation_ATPase"/>
    <property type="match status" value="1"/>
</dbReference>
<dbReference type="Pfam" id="PF00689">
    <property type="entry name" value="Cation_ATPase_C"/>
    <property type="match status" value="1"/>
</dbReference>
<dbReference type="Pfam" id="PF00690">
    <property type="entry name" value="Cation_ATPase_N"/>
    <property type="match status" value="1"/>
</dbReference>
<dbReference type="Pfam" id="PF00122">
    <property type="entry name" value="E1-E2_ATPase"/>
    <property type="match status" value="1"/>
</dbReference>
<dbReference type="PRINTS" id="PR00119">
    <property type="entry name" value="CATATPASE"/>
</dbReference>
<dbReference type="PRINTS" id="PR00121">
    <property type="entry name" value="NAKATPASE"/>
</dbReference>
<dbReference type="SFLD" id="SFLDG00002">
    <property type="entry name" value="C1.7:_P-type_atpase_like"/>
    <property type="match status" value="1"/>
</dbReference>
<dbReference type="SFLD" id="SFLDF00027">
    <property type="entry name" value="p-type_atpase"/>
    <property type="match status" value="1"/>
</dbReference>
<dbReference type="SMART" id="SM00831">
    <property type="entry name" value="Cation_ATPase_N"/>
    <property type="match status" value="1"/>
</dbReference>
<dbReference type="SUPFAM" id="SSF81653">
    <property type="entry name" value="Calcium ATPase, transduction domain A"/>
    <property type="match status" value="1"/>
</dbReference>
<dbReference type="SUPFAM" id="SSF81665">
    <property type="entry name" value="Calcium ATPase, transmembrane domain M"/>
    <property type="match status" value="1"/>
</dbReference>
<dbReference type="SUPFAM" id="SSF56784">
    <property type="entry name" value="HAD-like"/>
    <property type="match status" value="1"/>
</dbReference>
<dbReference type="SUPFAM" id="SSF81660">
    <property type="entry name" value="Metal cation-transporting ATPase, ATP-binding domain N"/>
    <property type="match status" value="1"/>
</dbReference>
<dbReference type="PROSITE" id="PS00154">
    <property type="entry name" value="ATPASE_E1_E2"/>
    <property type="match status" value="1"/>
</dbReference>
<comment type="function">
    <text evidence="2 4">This is the catalytic component of the active enzyme, which catalyzes the hydrolysis of ATP coupled with the exchange of sodium and potassium ions across the plasma membrane. This action creates the electrochemical gradient of sodium and potassium ions, providing the energy for active transport of various nutrients (By similarity). Could also be part of an osmosensory signaling pathway that senses body-fluid sodium levels and controls salt intake behavior as well as voluntary water intake to regulate sodium homeostasis (By similarity).</text>
</comment>
<comment type="catalytic activity">
    <reaction>
        <text>K(+)(out) + Na(+)(in) + ATP + H2O = K(+)(in) + Na(+)(out) + ADP + phosphate + H(+)</text>
        <dbReference type="Rhea" id="RHEA:18353"/>
        <dbReference type="ChEBI" id="CHEBI:15377"/>
        <dbReference type="ChEBI" id="CHEBI:15378"/>
        <dbReference type="ChEBI" id="CHEBI:29101"/>
        <dbReference type="ChEBI" id="CHEBI:29103"/>
        <dbReference type="ChEBI" id="CHEBI:30616"/>
        <dbReference type="ChEBI" id="CHEBI:43474"/>
        <dbReference type="ChEBI" id="CHEBI:456216"/>
        <dbReference type="EC" id="7.2.2.13"/>
    </reaction>
</comment>
<comment type="subunit">
    <text evidence="2 3 4">The sodium/potassium-transporting ATPase is composed of a catalytic alpha subunit, an auxiliary non-catalytic beta subunit and an additional regulatory subunit. Interacts with regulatory subunit FXYD1. Interacts with regulatory subunit FXYD3. Interacts with SIK1. Interacts with SLC35G1 and STIM1. Interacts with CLN3; this interaction regulates the sodium/potassium-transporting ATPase complex localization at the plasma membrane (By similarity). Interacts with SCN7A; activates ATP1A1 P-type sodium:potassium-exchanging transporter activity which indirectly signals to nearby neurons to regulate sodium homeostasis (By similarity).</text>
</comment>
<comment type="subcellular location">
    <subcellularLocation>
        <location evidence="4">Cell membrane</location>
        <topology evidence="5">Multi-pass membrane protein</topology>
    </subcellularLocation>
    <subcellularLocation>
        <location evidence="3">Basolateral cell membrane</location>
        <topology evidence="5">Multi-pass membrane protein</topology>
    </subcellularLocation>
    <subcellularLocation>
        <location evidence="2">Cell membrane</location>
        <location evidence="2">Sarcolemma</location>
        <topology evidence="5">Multi-pass membrane protein</topology>
    </subcellularLocation>
    <subcellularLocation>
        <location evidence="3">Cell projection</location>
        <location evidence="3">Axon</location>
    </subcellularLocation>
    <subcellularLocation>
        <location evidence="2">Melanosome</location>
    </subcellularLocation>
</comment>
<comment type="PTM">
    <text evidence="1">Phosphorylation on Tyr-10 modulates pumping activity. Phosphorylation of Ser-941 by PKA modulates the response of ATP1A1 to PKC. Dephosphorylation by protein phosphatase 2A (PP2A) following increases in intracellular sodium, leading to increase catalytic activity (By similarity).</text>
</comment>
<comment type="similarity">
    <text evidence="7">Belongs to the cation transport ATPase (P-type) (TC 3.A.3) family. Type IIC subfamily.</text>
</comment>
<proteinExistence type="inferred from homology"/>
<organism>
    <name type="scientific">Equus caballus</name>
    <name type="common">Horse</name>
    <dbReference type="NCBI Taxonomy" id="9796"/>
    <lineage>
        <taxon>Eukaryota</taxon>
        <taxon>Metazoa</taxon>
        <taxon>Chordata</taxon>
        <taxon>Craniata</taxon>
        <taxon>Vertebrata</taxon>
        <taxon>Euteleostomi</taxon>
        <taxon>Mammalia</taxon>
        <taxon>Eutheria</taxon>
        <taxon>Laurasiatheria</taxon>
        <taxon>Perissodactyla</taxon>
        <taxon>Equidae</taxon>
        <taxon>Equus</taxon>
    </lineage>
</organism>
<gene>
    <name type="primary">ATP1A1</name>
</gene>